<reference key="1">
    <citation type="journal article" date="2002" name="Proc. Natl. Acad. Sci. U.S.A.">
        <title>The defective kernel 1 (dek1) gene required for aleurone cell development in the endosperm of maize grains encodes a membrane protein of the calpain gene superfamily.</title>
        <authorList>
            <person name="Lid S.E."/>
            <person name="Gruis D."/>
            <person name="Jung R."/>
            <person name="Lorentzen J.A."/>
            <person name="Ananiev E."/>
            <person name="Chamberlin M."/>
            <person name="Niu X."/>
            <person name="Meeley R."/>
            <person name="Nichols S."/>
            <person name="Olsen O.-A."/>
        </authorList>
    </citation>
    <scope>NUCLEOTIDE SEQUENCE [MRNA] (ISOFORM 2)</scope>
    <scope>FUNCTION</scope>
    <scope>DISRUPTION PHENOTYPE</scope>
    <scope>TISSUE SPECIFICITY</scope>
    <scope>DEVELOPMENTAL STAGE</scope>
    <source>
        <strain>cv. B73</strain>
        <tissue>Endosperm</tissue>
    </source>
</reference>
<reference key="2">
    <citation type="journal article" date="2009" name="Science">
        <title>The B73 maize genome: complexity, diversity, and dynamics.</title>
        <authorList>
            <person name="Schnable P.S."/>
            <person name="Ware D."/>
            <person name="Fulton R.S."/>
            <person name="Stein J.C."/>
            <person name="Wei F."/>
            <person name="Pasternak S."/>
            <person name="Liang C."/>
            <person name="Zhang J."/>
            <person name="Fulton L."/>
            <person name="Graves T.A."/>
            <person name="Minx P."/>
            <person name="Reily A.D."/>
            <person name="Courtney L."/>
            <person name="Kruchowski S.S."/>
            <person name="Tomlinson C."/>
            <person name="Strong C."/>
            <person name="Delehaunty K."/>
            <person name="Fronick C."/>
            <person name="Courtney B."/>
            <person name="Rock S.M."/>
            <person name="Belter E."/>
            <person name="Du F."/>
            <person name="Kim K."/>
            <person name="Abbott R.M."/>
            <person name="Cotton M."/>
            <person name="Levy A."/>
            <person name="Marchetto P."/>
            <person name="Ochoa K."/>
            <person name="Jackson S.M."/>
            <person name="Gillam B."/>
            <person name="Chen W."/>
            <person name="Yan L."/>
            <person name="Higginbotham J."/>
            <person name="Cardenas M."/>
            <person name="Waligorski J."/>
            <person name="Applebaum E."/>
            <person name="Phelps L."/>
            <person name="Falcone J."/>
            <person name="Kanchi K."/>
            <person name="Thane T."/>
            <person name="Scimone A."/>
            <person name="Thane N."/>
            <person name="Henke J."/>
            <person name="Wang T."/>
            <person name="Ruppert J."/>
            <person name="Shah N."/>
            <person name="Rotter K."/>
            <person name="Hodges J."/>
            <person name="Ingenthron E."/>
            <person name="Cordes M."/>
            <person name="Kohlberg S."/>
            <person name="Sgro J."/>
            <person name="Delgado B."/>
            <person name="Mead K."/>
            <person name="Chinwalla A."/>
            <person name="Leonard S."/>
            <person name="Crouse K."/>
            <person name="Collura K."/>
            <person name="Kudrna D."/>
            <person name="Currie J."/>
            <person name="He R."/>
            <person name="Angelova A."/>
            <person name="Rajasekar S."/>
            <person name="Mueller T."/>
            <person name="Lomeli R."/>
            <person name="Scara G."/>
            <person name="Ko A."/>
            <person name="Delaney K."/>
            <person name="Wissotski M."/>
            <person name="Lopez G."/>
            <person name="Campos D."/>
            <person name="Braidotti M."/>
            <person name="Ashley E."/>
            <person name="Golser W."/>
            <person name="Kim H."/>
            <person name="Lee S."/>
            <person name="Lin J."/>
            <person name="Dujmic Z."/>
            <person name="Kim W."/>
            <person name="Talag J."/>
            <person name="Zuccolo A."/>
            <person name="Fan C."/>
            <person name="Sebastian A."/>
            <person name="Kramer M."/>
            <person name="Spiegel L."/>
            <person name="Nascimento L."/>
            <person name="Zutavern T."/>
            <person name="Miller B."/>
            <person name="Ambroise C."/>
            <person name="Muller S."/>
            <person name="Spooner W."/>
            <person name="Narechania A."/>
            <person name="Ren L."/>
            <person name="Wei S."/>
            <person name="Kumari S."/>
            <person name="Faga B."/>
            <person name="Levy M.J."/>
            <person name="McMahan L."/>
            <person name="Van Buren P."/>
            <person name="Vaughn M.W."/>
            <person name="Ying K."/>
            <person name="Yeh C.-T."/>
            <person name="Emrich S.J."/>
            <person name="Jia Y."/>
            <person name="Kalyanaraman A."/>
            <person name="Hsia A.-P."/>
            <person name="Barbazuk W.B."/>
            <person name="Baucom R.S."/>
            <person name="Brutnell T.P."/>
            <person name="Carpita N.C."/>
            <person name="Chaparro C."/>
            <person name="Chia J.-M."/>
            <person name="Deragon J.-M."/>
            <person name="Estill J.C."/>
            <person name="Fu Y."/>
            <person name="Jeddeloh J.A."/>
            <person name="Han Y."/>
            <person name="Lee H."/>
            <person name="Li P."/>
            <person name="Lisch D.R."/>
            <person name="Liu S."/>
            <person name="Liu Z."/>
            <person name="Nagel D.H."/>
            <person name="McCann M.C."/>
            <person name="SanMiguel P."/>
            <person name="Myers A.M."/>
            <person name="Nettleton D."/>
            <person name="Nguyen J."/>
            <person name="Penning B.W."/>
            <person name="Ponnala L."/>
            <person name="Schneider K.L."/>
            <person name="Schwartz D.C."/>
            <person name="Sharma A."/>
            <person name="Soderlund C."/>
            <person name="Springer N.M."/>
            <person name="Sun Q."/>
            <person name="Wang H."/>
            <person name="Waterman M."/>
            <person name="Westerman R."/>
            <person name="Wolfgruber T.K."/>
            <person name="Yang L."/>
            <person name="Yu Y."/>
            <person name="Zhang L."/>
            <person name="Zhou S."/>
            <person name="Zhu Q."/>
            <person name="Bennetzen J.L."/>
            <person name="Dawe R.K."/>
            <person name="Jiang J."/>
            <person name="Jiang N."/>
            <person name="Presting G.G."/>
            <person name="Wessler S.R."/>
            <person name="Aluru S."/>
            <person name="Martienssen R.A."/>
            <person name="Clifton S.W."/>
            <person name="McCombie W.R."/>
            <person name="Wing R.A."/>
            <person name="Wilson R.K."/>
        </authorList>
    </citation>
    <scope>NUCLEOTIDE SEQUENCE [LARGE SCALE GENOMIC DNA]</scope>
    <source>
        <strain>cv. B73</strain>
    </source>
</reference>
<reference key="3">
    <citation type="journal article" date="2009" name="PLoS Genet.">
        <title>Sequencing, mapping, and analysis of 27,455 maize full-length cDNAs.</title>
        <authorList>
            <person name="Soderlund C."/>
            <person name="Descour A."/>
            <person name="Kudrna D."/>
            <person name="Bomhoff M."/>
            <person name="Boyd L."/>
            <person name="Currie J."/>
            <person name="Angelova A."/>
            <person name="Collura K."/>
            <person name="Wissotski M."/>
            <person name="Ashley E."/>
            <person name="Morrow D."/>
            <person name="Fernandes J."/>
            <person name="Walbot V."/>
            <person name="Yu Y."/>
        </authorList>
    </citation>
    <scope>NUCLEOTIDE SEQUENCE [MRNA] (ISOFORM 2)</scope>
    <source>
        <strain>cv. B73</strain>
    </source>
</reference>
<reference key="4">
    <citation type="journal article" date="2003" name="J. Biol. Chem.">
        <title>The calpain domain of the maize DEK1 protein contains the conserved catalytic triad and functions as a cysteine proteinase.</title>
        <authorList>
            <person name="Wang C."/>
            <person name="Barry J.K."/>
            <person name="Min Z."/>
            <person name="Tordsen G."/>
            <person name="Rao A.G."/>
            <person name="Olsen O.A."/>
        </authorList>
    </citation>
    <scope>FUNCTION</scope>
    <scope>CATALYTIC ACTIVITY</scope>
    <scope>MUTAGENESIS OF CYS-1769</scope>
    <scope>TISSUE SPECIFICITY</scope>
</reference>
<reference key="5">
    <citation type="journal article" date="2007" name="Plant Cell">
        <title>Subcellular localization and functional domain studies of DEFECTIVE KERNEL1 in maize and Arabidopsis suggest a model for aleurone cell fate specification involving CRINKLY4 and SUPERNUMERARY ALEURONE LAYER1.</title>
        <authorList>
            <person name="Tian Q."/>
            <person name="Olsen L."/>
            <person name="Sun B."/>
            <person name="Lid S.E."/>
            <person name="Brown R.C."/>
            <person name="Lemmon B.E."/>
            <person name="Fosnes K."/>
            <person name="Gruis D.F."/>
            <person name="Opsahl-Sorteberg H.-G."/>
            <person name="Otegui M.S."/>
            <person name="Olsen O.-A."/>
        </authorList>
    </citation>
    <scope>FUNCTION</scope>
    <scope>SUBCELLULAR LOCATION</scope>
    <scope>DISRUPTION PHENOTYPE</scope>
</reference>
<keyword id="KW-0025">Alternative splicing</keyword>
<keyword id="KW-1003">Cell membrane</keyword>
<keyword id="KW-0963">Cytoplasm</keyword>
<keyword id="KW-0217">Developmental protein</keyword>
<keyword id="KW-0256">Endoplasmic reticulum</keyword>
<keyword id="KW-0967">Endosome</keyword>
<keyword id="KW-0378">Hydrolase</keyword>
<keyword id="KW-0472">Membrane</keyword>
<keyword id="KW-0597">Phosphoprotein</keyword>
<keyword id="KW-0645">Protease</keyword>
<keyword id="KW-1185">Reference proteome</keyword>
<keyword id="KW-0677">Repeat</keyword>
<keyword id="KW-0732">Signal</keyword>
<keyword id="KW-0788">Thiol protease</keyword>
<keyword id="KW-0812">Transmembrane</keyword>
<keyword id="KW-1133">Transmembrane helix</keyword>
<organism>
    <name type="scientific">Zea mays</name>
    <name type="common">Maize</name>
    <dbReference type="NCBI Taxonomy" id="4577"/>
    <lineage>
        <taxon>Eukaryota</taxon>
        <taxon>Viridiplantae</taxon>
        <taxon>Streptophyta</taxon>
        <taxon>Embryophyta</taxon>
        <taxon>Tracheophyta</taxon>
        <taxon>Spermatophyta</taxon>
        <taxon>Magnoliopsida</taxon>
        <taxon>Liliopsida</taxon>
        <taxon>Poales</taxon>
        <taxon>Poaceae</taxon>
        <taxon>PACMAD clade</taxon>
        <taxon>Panicoideae</taxon>
        <taxon>Andropogonodae</taxon>
        <taxon>Andropogoneae</taxon>
        <taxon>Tripsacinae</taxon>
        <taxon>Zea</taxon>
    </lineage>
</organism>
<dbReference type="EC" id="3.4.22.-"/>
<dbReference type="EMBL" id="AY061806">
    <property type="protein sequence ID" value="AAL38189.1"/>
    <property type="molecule type" value="mRNA"/>
</dbReference>
<dbReference type="EMBL" id="CM007647">
    <property type="status" value="NOT_ANNOTATED_CDS"/>
    <property type="molecule type" value="Genomic_DNA"/>
</dbReference>
<dbReference type="EMBL" id="BT035904">
    <property type="protein sequence ID" value="ACF80909.1"/>
    <property type="molecule type" value="mRNA"/>
</dbReference>
<dbReference type="RefSeq" id="NP_001105528.1">
    <property type="nucleotide sequence ID" value="NM_001112058.1"/>
</dbReference>
<dbReference type="RefSeq" id="XP_008648830.1">
    <property type="nucleotide sequence ID" value="XM_008650608.1"/>
</dbReference>
<dbReference type="SMR" id="Q8RVL1"/>
<dbReference type="FunCoup" id="Q8RVL1">
    <property type="interactions" value="975"/>
</dbReference>
<dbReference type="STRING" id="4577.Q8RVL1"/>
<dbReference type="MEROPS" id="C02.019"/>
<dbReference type="PaxDb" id="4577-GRMZM2G321753_P01"/>
<dbReference type="GeneID" id="542509"/>
<dbReference type="KEGG" id="zma:542509"/>
<dbReference type="MaizeGDB" id="12148"/>
<dbReference type="eggNOG" id="KOG0045">
    <property type="taxonomic scope" value="Eukaryota"/>
</dbReference>
<dbReference type="InParanoid" id="Q8RVL1"/>
<dbReference type="OrthoDB" id="424753at2759"/>
<dbReference type="Proteomes" id="UP000007305">
    <property type="component" value="Unplaced"/>
</dbReference>
<dbReference type="ExpressionAtlas" id="Q8RVL1">
    <property type="expression patterns" value="baseline and differential"/>
</dbReference>
<dbReference type="GO" id="GO:0005737">
    <property type="term" value="C:cytoplasm"/>
    <property type="evidence" value="ECO:0000250"/>
    <property type="project" value="UniProtKB"/>
</dbReference>
<dbReference type="GO" id="GO:0005789">
    <property type="term" value="C:endoplasmic reticulum membrane"/>
    <property type="evidence" value="ECO:0000250"/>
    <property type="project" value="UniProtKB"/>
</dbReference>
<dbReference type="GO" id="GO:0010008">
    <property type="term" value="C:endosome membrane"/>
    <property type="evidence" value="ECO:0000314"/>
    <property type="project" value="UniProtKB"/>
</dbReference>
<dbReference type="GO" id="GO:0005886">
    <property type="term" value="C:plasma membrane"/>
    <property type="evidence" value="ECO:0000314"/>
    <property type="project" value="UniProtKB"/>
</dbReference>
<dbReference type="GO" id="GO:0004198">
    <property type="term" value="F:calcium-dependent cysteine-type endopeptidase activity"/>
    <property type="evidence" value="ECO:0007669"/>
    <property type="project" value="InterPro"/>
</dbReference>
<dbReference type="GO" id="GO:0008234">
    <property type="term" value="F:cysteine-type peptidase activity"/>
    <property type="evidence" value="ECO:0000315"/>
    <property type="project" value="UniProtKB"/>
</dbReference>
<dbReference type="GO" id="GO:0009793">
    <property type="term" value="P:embryo development ending in seed dormancy"/>
    <property type="evidence" value="ECO:0000250"/>
    <property type="project" value="UniProtKB"/>
</dbReference>
<dbReference type="GO" id="GO:0090628">
    <property type="term" value="P:plant epidermal cell fate specification"/>
    <property type="evidence" value="ECO:0000250"/>
    <property type="project" value="UniProtKB"/>
</dbReference>
<dbReference type="GO" id="GO:2000011">
    <property type="term" value="P:regulation of adaxial/abaxial pattern formation"/>
    <property type="evidence" value="ECO:0000250"/>
    <property type="project" value="UniProtKB"/>
</dbReference>
<dbReference type="GO" id="GO:0001558">
    <property type="term" value="P:regulation of cell growth"/>
    <property type="evidence" value="ECO:0000250"/>
    <property type="project" value="UniProtKB"/>
</dbReference>
<dbReference type="GO" id="GO:0042127">
    <property type="term" value="P:regulation of cell population proliferation"/>
    <property type="evidence" value="ECO:0000250"/>
    <property type="project" value="UniProtKB"/>
</dbReference>
<dbReference type="GO" id="GO:2000014">
    <property type="term" value="P:regulation of endosperm development"/>
    <property type="evidence" value="ECO:0000250"/>
    <property type="project" value="UniProtKB"/>
</dbReference>
<dbReference type="GO" id="GO:2000024">
    <property type="term" value="P:regulation of leaf development"/>
    <property type="evidence" value="ECO:0000250"/>
    <property type="project" value="UniProtKB"/>
</dbReference>
<dbReference type="GO" id="GO:0009934">
    <property type="term" value="P:regulation of meristem structural organization"/>
    <property type="evidence" value="ECO:0000250"/>
    <property type="project" value="UniProtKB"/>
</dbReference>
<dbReference type="GO" id="GO:0097264">
    <property type="term" value="P:self proteolysis"/>
    <property type="evidence" value="ECO:0000250"/>
    <property type="project" value="UniProtKB"/>
</dbReference>
<dbReference type="CDD" id="cd00044">
    <property type="entry name" value="CysPc"/>
    <property type="match status" value="1"/>
</dbReference>
<dbReference type="FunFam" id="2.60.120.200:FF:000165">
    <property type="entry name" value="Calpain-type cysteine protease DEK1"/>
    <property type="match status" value="1"/>
</dbReference>
<dbReference type="FunFam" id="3.90.70.10:FF:000038">
    <property type="entry name" value="Calpain-type cysteine protease DEK1"/>
    <property type="match status" value="1"/>
</dbReference>
<dbReference type="FunFam" id="2.60.120.380:FF:000005">
    <property type="entry name" value="calpain-type cysteine protease DEK1"/>
    <property type="match status" value="1"/>
</dbReference>
<dbReference type="Gene3D" id="2.60.120.200">
    <property type="match status" value="1"/>
</dbReference>
<dbReference type="Gene3D" id="2.60.120.380">
    <property type="match status" value="1"/>
</dbReference>
<dbReference type="Gene3D" id="3.90.70.10">
    <property type="entry name" value="Cysteine proteinases"/>
    <property type="match status" value="1"/>
</dbReference>
<dbReference type="InterPro" id="IPR022684">
    <property type="entry name" value="Calpain_cysteine_protease"/>
</dbReference>
<dbReference type="InterPro" id="IPR022682">
    <property type="entry name" value="Calpain_domain_III"/>
</dbReference>
<dbReference type="InterPro" id="IPR022683">
    <property type="entry name" value="Calpain_III"/>
</dbReference>
<dbReference type="InterPro" id="IPR036213">
    <property type="entry name" value="Calpain_III_sf"/>
</dbReference>
<dbReference type="InterPro" id="IPR013320">
    <property type="entry name" value="ConA-like_dom_sf"/>
</dbReference>
<dbReference type="InterPro" id="IPR038765">
    <property type="entry name" value="Papain-like_cys_pep_sf"/>
</dbReference>
<dbReference type="InterPro" id="IPR000169">
    <property type="entry name" value="Pept_cys_AS"/>
</dbReference>
<dbReference type="InterPro" id="IPR001300">
    <property type="entry name" value="Peptidase_C2_calpain_cat"/>
</dbReference>
<dbReference type="PANTHER" id="PTHR10183">
    <property type="entry name" value="CALPAIN"/>
    <property type="match status" value="1"/>
</dbReference>
<dbReference type="PANTHER" id="PTHR10183:SF379">
    <property type="entry name" value="CALPAIN-5"/>
    <property type="match status" value="1"/>
</dbReference>
<dbReference type="Pfam" id="PF01067">
    <property type="entry name" value="Calpain_III"/>
    <property type="match status" value="1"/>
</dbReference>
<dbReference type="Pfam" id="PF00648">
    <property type="entry name" value="Peptidase_C2"/>
    <property type="match status" value="1"/>
</dbReference>
<dbReference type="SMART" id="SM00720">
    <property type="entry name" value="calpain_III"/>
    <property type="match status" value="1"/>
</dbReference>
<dbReference type="SMART" id="SM00230">
    <property type="entry name" value="CysPc"/>
    <property type="match status" value="1"/>
</dbReference>
<dbReference type="SUPFAM" id="SSF49758">
    <property type="entry name" value="Calpain large subunit, middle domain (domain III)"/>
    <property type="match status" value="1"/>
</dbReference>
<dbReference type="SUPFAM" id="SSF49899">
    <property type="entry name" value="Concanavalin A-like lectins/glucanases"/>
    <property type="match status" value="1"/>
</dbReference>
<dbReference type="SUPFAM" id="SSF54001">
    <property type="entry name" value="Cysteine proteinases"/>
    <property type="match status" value="1"/>
</dbReference>
<dbReference type="PROSITE" id="PS50203">
    <property type="entry name" value="CALPAIN_CAT"/>
    <property type="match status" value="1"/>
</dbReference>
<dbReference type="PROSITE" id="PS00139">
    <property type="entry name" value="THIOL_PROTEASE_CYS"/>
    <property type="match status" value="1"/>
</dbReference>
<sequence length="2159" mass="239106">MEGEGHHGVVLACSICGFLFAVLSPFSFWVLWAVNWRPWRLYSWIYARKWPTYVQGPQLSTLCSLLTLCAWLVVISPIAVLLVWGSVLIALMERNIIGLAVIMAGVALLLSFYSIMLWWRTQWQSSEAVAYLLLLAVCLLCAYDFCAIYVTAGASASELNSPSGFFFGVSVISLAINMLFICKILFNVSGFDVDEYVRRSYKFAYSDCVEVAPVSCSPEPPDPSELYMTKSSRVKHLGLLYISSLLVLVGYSILYGLTSKEARWLGALTSVAVVILDWNLGLCSFRFELLKSRMIVLFVAGTSRAFLVSFGVHYWYLGHCISYAFVASVLLSAAVSSWLSISNPSVARIDALRSTVIKLREGFRRKGQNSSSNSSEGCGSSVKRSSGSVEAGQNGNAMDSMYRSNSQSDGVNWSSIPFDRSNSCQEGRSSDKNIDSARASLAHRSNSCLSAVQDSETAVVSVDRHGDPITSLVCSSSGLESHGCEPSGSATTSGNQQLLDLNLAAIFQDRLNDPRISSMLKKNGGLGDVELANLLQDKGLDPNFSYMLKDKVMDPRILALLQRSSLDADREHQDDVDVTATDSDRLDTTIANQISLSEELRRSGLEKWLNISRLIFHHLAGSPIRAFIVFTVMFIIETATVAIYRPETIKVINATHEQFEFGFSILLLSPVVCSIMAFIWSLRAEEMLMTSKPQKYGFIAWLLSTCVGLFLSFLSKSSVILGLSLTVPLMVACLSFAVPIWIRNGYSFWIPGREFANRENVSQAPGEKERALFVITIAVFTASIIGLGAIVSAKPLDALGYKGWDADKNSSYSPYATSMYLGWALSSTIAVITTGLIPIVAWFATYRFSPSSAICVGLFATVLVSFCGASYWGVVNSREDGVPLKADFLAALLPLLCIPAFFSLFTGLYKWKDDDWKISRGVYLFVGMGMLLLFGAVAAVIVTIRPWTVGVACLVAILFLVFVIGVIHYWTSNNFYLTRTQMLLVCSIAFLLALAAFLMGLFHGKPFVGASIGYFSFIFLLTGRALTVLLSPPIVVYSPRVLPVYVYDAHADSAKNVSYAFLILYGIALATEVWGVIASLIMNPPFVGAGVSATTLVIAFSFAVSRPCLTLKMMEDAVHFLSKDTVVQAMSRSANKTRNAISGTYSAPQRSASSAALLVGDPALTLDRAGNFVLPRADVMKLRDRLRNEEIAAGSFLCGVKDCLLICPQSLSNIDYRRNMCAHARILALEEAIDTEWVYMWDKFGGYLLLLLGLTAKAEQIQDEVRLRLFLDSIGLSDLSAKEIKKWMPEDRRQFELIQESYIREKEMEEEALMQRREEEGKGRERRRALLEREERKWKELEISLLSSIPNTGSRDAAAMAAAVRAVGGDSALEDSFARDRVSSIANHIRKAQLARRAEQTGIPGTICILDDEPRSTGRHCGELDLCLCQSQKVTLSIAVMVQPVSGPVCLFGSEFQKVCWEILVAGSEQGMEAGQVGLRLVTKGERMTTVAKEWNIGASSIADGRWHLVTVTLDADLGEATSFIDGVYDGYQNGLPLPTDNGIWEPGTDIWVGARPPMDLDAFGRSDSEGSDSKMQIMDAFLWGRCLSEDEVTVLHTAMSPAEYGFFDLAPGDAWHGSYSARVDDWESEEAYELYDQGDVEWDGQYSSGRKRPVHDAVAIDLDSFARRPRKPRFETRDEVNQRMLSVERAVRDALIAKGERNFTDQEFPPEDRSLFVDPMNPPLKLQVVSEWMRPSDIAKDISISCQPCLFSGSVNSSDVCQGRLGDCWFLSAVAVLTEMSRISEVIITPEYNDEGIYTVRFCIQGEWVAVVVDDWIPCESPGKPAFATSRKQNELWVSILEKAYAKLHGSYEALEGGLVQDALVDLTGGAGEEIDMRSPQAQLDLASGRLWSQLLHFKQEGFLLGAGSPSGSDAHISSSGIVQGHAYSILQVREVDGHKLIQIRNPWANEVEWNGPWSDSSPEWTERMKHKLMHVPQSKNGVFWMSWQDFQIHFRSIYVCRVYPPEMRYSVHGQWRGYNAGGCQDYDSWHQNPQYRLRVTGRDALYPVHVFITLTQGVGFSRKTNGFRNYQSSHDSSMFYIGMRILKTQGCRAAYNIYMHESAGGTDYVNSREISCELVLDPYPKGYTIVPTTIHPGEEAPFVLSVFSKASIRLEAV</sequence>
<comment type="function">
    <text evidence="5 6 7">Essential protease involved in epiderm development. Required for aleurone cell development in the endosperm probably by maintaining and restricting the aleurone and embryonic epidermal L1 cell-layer fates as well as meristems organization. Involved in the maintenance of adaxial/abaxial axis information in developing leaves, probably by regulating cell proliferation and expansion. Does not need calcium ions to be active.</text>
</comment>
<comment type="subcellular location">
    <subcellularLocation>
        <location evidence="1">Endoplasmic reticulum membrane</location>
        <topology evidence="1">Multi-pass membrane protein</topology>
    </subcellularLocation>
    <subcellularLocation>
        <location evidence="1">Cytoplasm</location>
    </subcellularLocation>
    <subcellularLocation>
        <location evidence="7">Cell membrane</location>
        <topology evidence="7">Multi-pass membrane protein</topology>
    </subcellularLocation>
    <subcellularLocation>
        <location evidence="7">Endosome membrane</location>
        <topology evidence="7">Multi-pass membrane protein</topology>
    </subcellularLocation>
</comment>
<comment type="alternative products">
    <event type="alternative splicing"/>
    <isoform>
        <id>Q8RVL1-1</id>
        <name>1</name>
        <sequence type="displayed"/>
    </isoform>
    <isoform>
        <id>Q8RVL1-2</id>
        <name>2</name>
        <sequence type="described" ref="VSP_047871"/>
    </isoform>
</comment>
<comment type="tissue specificity">
    <text evidence="5 6">Expressed in most tissues at low levels ranging from 30 to 55 ppm. Present in all endosperm cells at transcript level, but confined to aleurones at protein level.</text>
</comment>
<comment type="developmental stage">
    <text evidence="5">In endosperm, accumulates during early developmental stages and declines near maturity. In embryos, levels peak at middevelopment with highest expression in the embryonic axis. Also present in young pericarp and immature ear tip and base.</text>
</comment>
<comment type="domain">
    <text evidence="1">The transmembrane regions are not required for calpain activity but may play regulatory roles.</text>
</comment>
<comment type="PTM">
    <text evidence="1">Autocatalytic proteolytic cleavage leading to the production of mainly cytoplasmic localized subproducts of about 85 and 120 kDa.</text>
</comment>
<comment type="disruption phenotype">
    <text evidence="5 7">Loss of aleurone cells leading to white grains. Embryos arrest at the juvenile globoid stage and are devoid of shoot structures.</text>
</comment>
<comment type="miscellaneous">
    <text evidence="1">Although homology to other calpains is high within the protease domain, the lack of calcium-binding sites suggests that this protein is a protease that may not be activated by calcium ions.</text>
</comment>
<comment type="similarity">
    <text evidence="10">Belongs to the peptidase C2 family.</text>
</comment>
<protein>
    <recommendedName>
        <fullName>Calpain-type cysteine protease DEK1</fullName>
        <ecNumber>3.4.22.-</ecNumber>
    </recommendedName>
    <alternativeName>
        <fullName>Phytocalpain DEK1</fullName>
    </alternativeName>
    <alternativeName>
        <fullName>Protein DEFECTIVE KERNEL 1</fullName>
        <shortName>ZmDEK1</shortName>
    </alternativeName>
</protein>
<accession>Q8RVL1</accession>
<accession>B4FFL6</accession>
<evidence type="ECO:0000250" key="1"/>
<evidence type="ECO:0000255" key="2"/>
<evidence type="ECO:0000255" key="3">
    <source>
        <dbReference type="PROSITE-ProRule" id="PRU00239"/>
    </source>
</evidence>
<evidence type="ECO:0000256" key="4">
    <source>
        <dbReference type="SAM" id="MobiDB-lite"/>
    </source>
</evidence>
<evidence type="ECO:0000269" key="5">
    <source>
    </source>
</evidence>
<evidence type="ECO:0000269" key="6">
    <source>
    </source>
</evidence>
<evidence type="ECO:0000269" key="7">
    <source>
    </source>
</evidence>
<evidence type="ECO:0000303" key="8">
    <source>
    </source>
</evidence>
<evidence type="ECO:0000303" key="9">
    <source>
    </source>
</evidence>
<evidence type="ECO:0000305" key="10"/>
<feature type="signal peptide" evidence="2">
    <location>
        <begin position="1"/>
        <end position="33"/>
    </location>
</feature>
<feature type="chain" id="PRO_0000423439" description="Calpain-type cysteine protease DEK1">
    <location>
        <begin position="34"/>
        <end position="2159"/>
    </location>
</feature>
<feature type="propeptide" id="PRO_0000423440" evidence="1">
    <location>
        <begin position="34"/>
        <end status="unknown"/>
    </location>
</feature>
<feature type="topological domain" description="Extracellular" evidence="2">
    <location>
        <begin position="34"/>
        <end position="70"/>
    </location>
</feature>
<feature type="transmembrane region" description="Helical; Name=1" evidence="2">
    <location>
        <begin position="71"/>
        <end position="91"/>
    </location>
</feature>
<feature type="topological domain" description="Cytoplasmic" evidence="2">
    <location>
        <begin position="92"/>
        <end position="95"/>
    </location>
</feature>
<feature type="transmembrane region" description="Helical; Name=2" evidence="2">
    <location>
        <begin position="96"/>
        <end position="116"/>
    </location>
</feature>
<feature type="topological domain" description="Extracellular" evidence="2">
    <location>
        <begin position="117"/>
        <end position="127"/>
    </location>
</feature>
<feature type="transmembrane region" description="Helical; Name=3" evidence="2">
    <location>
        <begin position="128"/>
        <end position="148"/>
    </location>
</feature>
<feature type="topological domain" description="Cytoplasmic" evidence="2">
    <location>
        <begin position="149"/>
        <end position="164"/>
    </location>
</feature>
<feature type="transmembrane region" description="Helical; Name=4" evidence="2">
    <location>
        <begin position="165"/>
        <end position="185"/>
    </location>
</feature>
<feature type="topological domain" description="Extracellular" evidence="2">
    <location>
        <begin position="186"/>
        <end position="236"/>
    </location>
</feature>
<feature type="transmembrane region" description="Helical; Name=5" evidence="2">
    <location>
        <begin position="237"/>
        <end position="257"/>
    </location>
</feature>
<feature type="topological domain" description="Cytoplasmic" evidence="2">
    <location>
        <begin position="258"/>
        <end position="264"/>
    </location>
</feature>
<feature type="transmembrane region" description="Helical; Name=6" evidence="2">
    <location>
        <begin position="265"/>
        <end position="285"/>
    </location>
</feature>
<feature type="topological domain" description="Extracellular" evidence="2">
    <location>
        <begin position="286"/>
        <end position="294"/>
    </location>
</feature>
<feature type="transmembrane region" description="Helical; Name=7" evidence="2">
    <location>
        <begin position="295"/>
        <end position="315"/>
    </location>
</feature>
<feature type="topological domain" description="Cytoplasmic" evidence="2">
    <location>
        <begin position="316"/>
        <end position="320"/>
    </location>
</feature>
<feature type="transmembrane region" description="Helical; Name=8" evidence="2">
    <location>
        <begin position="321"/>
        <end position="341"/>
    </location>
</feature>
<feature type="topological domain" description="Extracellular" evidence="2">
    <location>
        <begin position="342"/>
        <end position="623"/>
    </location>
</feature>
<feature type="transmembrane region" description="Helical; Name=9" evidence="2">
    <location>
        <begin position="624"/>
        <end position="644"/>
    </location>
</feature>
<feature type="topological domain" description="Cytoplasmic" evidence="2">
    <location>
        <begin position="645"/>
        <end position="660"/>
    </location>
</feature>
<feature type="transmembrane region" description="Helical; Name=10" evidence="2">
    <location>
        <begin position="661"/>
        <end position="681"/>
    </location>
</feature>
<feature type="topological domain" description="Extracellular" evidence="2">
    <location>
        <begin position="682"/>
        <end position="694"/>
    </location>
</feature>
<feature type="transmembrane region" description="Helical; Name=11" evidence="2">
    <location>
        <begin position="695"/>
        <end position="715"/>
    </location>
</feature>
<feature type="topological domain" description="Cytoplasmic" evidence="2">
    <location>
        <begin position="716"/>
        <end position="719"/>
    </location>
</feature>
<feature type="transmembrane region" description="Helical; Name=12" evidence="2">
    <location>
        <begin position="720"/>
        <end position="740"/>
    </location>
</feature>
<feature type="topological domain" description="Extracellular" evidence="2">
    <location>
        <begin position="741"/>
        <end position="770"/>
    </location>
</feature>
<feature type="transmembrane region" description="Helical; Name=13" evidence="2">
    <location>
        <begin position="771"/>
        <end position="791"/>
    </location>
</feature>
<feature type="topological domain" description="Cytoplasmic" evidence="2">
    <location>
        <begin position="792"/>
        <end position="822"/>
    </location>
</feature>
<feature type="transmembrane region" description="Helical; Name=14" evidence="2">
    <location>
        <begin position="823"/>
        <end position="843"/>
    </location>
</feature>
<feature type="topological domain" description="Extracellular" evidence="2">
    <location>
        <begin position="844"/>
        <end position="853"/>
    </location>
</feature>
<feature type="transmembrane region" description="Helical; Name=15" evidence="2">
    <location>
        <begin position="854"/>
        <end position="874"/>
    </location>
</feature>
<feature type="topological domain" description="Cytoplasmic" evidence="2">
    <location>
        <begin position="875"/>
        <end position="887"/>
    </location>
</feature>
<feature type="transmembrane region" description="Helical; Name=16" evidence="2">
    <location>
        <begin position="888"/>
        <end position="908"/>
    </location>
</feature>
<feature type="topological domain" description="Extracellular" evidence="2">
    <location>
        <begin position="909"/>
        <end position="921"/>
    </location>
</feature>
<feature type="transmembrane region" description="Helical; Name=17" evidence="2">
    <location>
        <begin position="922"/>
        <end position="942"/>
    </location>
</feature>
<feature type="topological domain" description="Cytoplasmic" evidence="2">
    <location>
        <begin position="943"/>
        <end position="946"/>
    </location>
</feature>
<feature type="transmembrane region" description="Helical; Name=18" evidence="2">
    <location>
        <begin position="947"/>
        <end position="967"/>
    </location>
</feature>
<feature type="topological domain" description="Extracellular" evidence="2">
    <location>
        <begin position="968"/>
        <end position="981"/>
    </location>
</feature>
<feature type="transmembrane region" description="Helical; Name=19" evidence="2">
    <location>
        <begin position="982"/>
        <end position="1002"/>
    </location>
</feature>
<feature type="topological domain" description="Cytoplasmic" evidence="2">
    <location>
        <begin position="1003"/>
        <end position="1016"/>
    </location>
</feature>
<feature type="transmembrane region" description="Helical; Name=20" evidence="2">
    <location>
        <begin position="1017"/>
        <end position="1037"/>
    </location>
</feature>
<feature type="topological domain" description="Extracellular" evidence="2">
    <location>
        <begin position="1038"/>
        <end position="1060"/>
    </location>
</feature>
<feature type="transmembrane region" description="Helical; Name=21" evidence="2">
    <location>
        <begin position="1061"/>
        <end position="1081"/>
    </location>
</feature>
<feature type="topological domain" description="Cytoplasmic" evidence="2">
    <location>
        <begin position="1082"/>
        <end position="2159"/>
    </location>
</feature>
<feature type="domain" description="Calpain catalytic 1" evidence="3">
    <location>
        <begin position="1417"/>
        <end position="1609"/>
    </location>
</feature>
<feature type="domain" description="Calpain catalytic 2" evidence="3">
    <location>
        <begin position="1703"/>
        <end position="2005"/>
    </location>
</feature>
<feature type="region of interest" description="Disordered" evidence="4">
    <location>
        <begin position="365"/>
        <end position="409"/>
    </location>
</feature>
<feature type="compositionally biased region" description="Low complexity" evidence="4">
    <location>
        <begin position="369"/>
        <end position="381"/>
    </location>
</feature>
<feature type="compositionally biased region" description="Polar residues" evidence="4">
    <location>
        <begin position="382"/>
        <end position="409"/>
    </location>
</feature>
<feature type="active site" evidence="1">
    <location>
        <position position="1769"/>
    </location>
</feature>
<feature type="active site" evidence="1">
    <location>
        <position position="1927"/>
    </location>
</feature>
<feature type="active site" evidence="1">
    <location>
        <position position="1947"/>
    </location>
</feature>
<feature type="modified residue" description="Phosphoserine" evidence="1">
    <location>
        <position position="1371"/>
    </location>
</feature>
<feature type="modified residue" description="Phosphoserine" evidence="1">
    <location>
        <position position="1376"/>
    </location>
</feature>
<feature type="modified residue" description="Phosphoserine" evidence="1">
    <location>
        <position position="1665"/>
    </location>
</feature>
<feature type="splice variant" id="VSP_047871" description="In isoform 2." evidence="8 9">
    <location>
        <begin position="1"/>
        <end position="1877"/>
    </location>
</feature>
<feature type="mutagenesis site" description="Loss of activity." evidence="6">
    <original>C</original>
    <variation>S</variation>
    <location>
        <position position="1769"/>
    </location>
</feature>
<feature type="sequence conflict" description="In Ref. 1; AAL38189." evidence="10" ref="1">
    <original>M</original>
    <variation>L</variation>
    <location>
        <position position="92"/>
    </location>
</feature>
<feature type="sequence conflict" description="In Ref. 1; AAL38189." evidence="10" ref="1">
    <original>E</original>
    <variation>K</variation>
    <location>
        <position position="127"/>
    </location>
</feature>
<feature type="sequence conflict" description="In Ref. 1; AAL38189." evidence="10" ref="1">
    <original>C</original>
    <variation>G</variation>
    <location>
        <position position="138"/>
    </location>
</feature>
<feature type="sequence conflict" description="In Ref. 1; AAL38189." evidence="10" ref="1">
    <original>M</original>
    <variation>T</variation>
    <location>
        <position position="398"/>
    </location>
</feature>
<feature type="sequence conflict" description="In Ref. 1; AAL38189." evidence="10" ref="1">
    <original>I</original>
    <variation>T</variation>
    <location>
        <position position="469"/>
    </location>
</feature>
<name>DEK1_MAIZE</name>
<proteinExistence type="evidence at protein level"/>
<gene>
    <name type="primary">DEK1</name>
</gene>